<comment type="interaction">
    <interactant intactId="EBI-38289">
        <id>Q08912</id>
    </interactant>
    <interactant intactId="EBI-11670">
        <id>P36006</id>
        <label>MYO3</label>
    </interactant>
    <organismsDiffer>false</organismsDiffer>
    <experiments>2</experiments>
</comment>
<comment type="interaction">
    <interactant intactId="EBI-38289">
        <id>Q08912</id>
    </interactant>
    <interactant intactId="EBI-11687">
        <id>Q04439</id>
        <label>MYO5</label>
    </interactant>
    <organismsDiffer>false</organismsDiffer>
    <experiments>2</experiments>
</comment>
<comment type="subcellular location">
    <subcellularLocation>
        <location evidence="3">Secreted</location>
    </subcellularLocation>
</comment>
<feature type="signal peptide" evidence="1">
    <location>
        <begin position="1"/>
        <end position="29"/>
    </location>
</feature>
<feature type="chain" id="PRO_0000244637" description="Uncharacterized protein YOR389W">
    <location>
        <begin position="30"/>
        <end position="624"/>
    </location>
</feature>
<feature type="region of interest" description="Disordered" evidence="2">
    <location>
        <begin position="141"/>
        <end position="174"/>
    </location>
</feature>
<feature type="glycosylation site" description="N-linked (GlcNAc...) asparagine" evidence="1">
    <location>
        <position position="68"/>
    </location>
</feature>
<feature type="glycosylation site" description="N-linked (GlcNAc...) asparagine" evidence="1">
    <location>
        <position position="150"/>
    </location>
</feature>
<feature type="glycosylation site" description="N-linked (GlcNAc...) asparagine" evidence="1">
    <location>
        <position position="219"/>
    </location>
</feature>
<feature type="glycosylation site" description="N-linked (GlcNAc...) asparagine" evidence="1">
    <location>
        <position position="366"/>
    </location>
</feature>
<feature type="glycosylation site" description="N-linked (GlcNAc...) asparagine" evidence="1">
    <location>
        <position position="441"/>
    </location>
</feature>
<feature type="glycosylation site" description="N-linked (GlcNAc...) asparagine" evidence="1">
    <location>
        <position position="447"/>
    </location>
</feature>
<feature type="glycosylation site" description="N-linked (GlcNAc...) asparagine" evidence="1">
    <location>
        <position position="464"/>
    </location>
</feature>
<feature type="glycosylation site" description="N-linked (GlcNAc...) asparagine" evidence="1">
    <location>
        <position position="528"/>
    </location>
</feature>
<accession>Q08912</accession>
<accession>D6W382</accession>
<proteinExistence type="evidence at protein level"/>
<gene>
    <name type="ordered locus">YOR389W</name>
</gene>
<name>YO389_YEAST</name>
<protein>
    <recommendedName>
        <fullName>Uncharacterized protein YOR389W</fullName>
    </recommendedName>
</protein>
<keyword id="KW-0325">Glycoprotein</keyword>
<keyword id="KW-1185">Reference proteome</keyword>
<keyword id="KW-0964">Secreted</keyword>
<keyword id="KW-0732">Signal</keyword>
<dbReference type="EMBL" id="Z75297">
    <property type="protein sequence ID" value="CAA99721.1"/>
    <property type="molecule type" value="Genomic_DNA"/>
</dbReference>
<dbReference type="EMBL" id="BK006948">
    <property type="protein sequence ID" value="DAA11148.1"/>
    <property type="molecule type" value="Genomic_DNA"/>
</dbReference>
<dbReference type="PIR" id="S67301">
    <property type="entry name" value="S67301"/>
</dbReference>
<dbReference type="RefSeq" id="NP_015034.3">
    <property type="nucleotide sequence ID" value="NM_001183809.3"/>
</dbReference>
<dbReference type="BioGRID" id="34770">
    <property type="interactions" value="17"/>
</dbReference>
<dbReference type="DIP" id="DIP-5557N"/>
<dbReference type="FunCoup" id="Q08912">
    <property type="interactions" value="53"/>
</dbReference>
<dbReference type="IntAct" id="Q08912">
    <property type="interactions" value="3"/>
</dbReference>
<dbReference type="MINT" id="Q08912"/>
<dbReference type="STRING" id="4932.YOR389W"/>
<dbReference type="GlyGen" id="Q08912">
    <property type="glycosylation" value="8 sites"/>
</dbReference>
<dbReference type="PaxDb" id="4932-YOR389W"/>
<dbReference type="PeptideAtlas" id="Q08912"/>
<dbReference type="EnsemblFungi" id="YOR389W_mRNA">
    <property type="protein sequence ID" value="YOR389W"/>
    <property type="gene ID" value="YOR389W"/>
</dbReference>
<dbReference type="GeneID" id="854571"/>
<dbReference type="KEGG" id="sce:YOR389W"/>
<dbReference type="AGR" id="SGD:S000005916"/>
<dbReference type="SGD" id="S000005916">
    <property type="gene designation" value="YOR389W"/>
</dbReference>
<dbReference type="VEuPathDB" id="FungiDB:YOR389W"/>
<dbReference type="eggNOG" id="ENOG502QRJE">
    <property type="taxonomic scope" value="Eukaryota"/>
</dbReference>
<dbReference type="GeneTree" id="ENSGT00940000176428"/>
<dbReference type="HOGENOM" id="CLU_017366_3_0_1"/>
<dbReference type="InParanoid" id="Q08912"/>
<dbReference type="OMA" id="WPMGTVE"/>
<dbReference type="OrthoDB" id="10261782at2759"/>
<dbReference type="BioCyc" id="YEAST:G3O-33850-MONOMER"/>
<dbReference type="BioGRID-ORCS" id="854571">
    <property type="hits" value="0 hits in 10 CRISPR screens"/>
</dbReference>
<dbReference type="PRO" id="PR:Q08912"/>
<dbReference type="Proteomes" id="UP000002311">
    <property type="component" value="Chromosome XV"/>
</dbReference>
<dbReference type="RNAct" id="Q08912">
    <property type="molecule type" value="protein"/>
</dbReference>
<dbReference type="GO" id="GO:0005576">
    <property type="term" value="C:extracellular region"/>
    <property type="evidence" value="ECO:0007669"/>
    <property type="project" value="UniProtKB-SubCell"/>
</dbReference>
<dbReference type="InterPro" id="IPR038921">
    <property type="entry name" value="YOR389W-like"/>
</dbReference>
<dbReference type="PANTHER" id="PTHR35204:SF1">
    <property type="entry name" value="ENTEROTOXIN"/>
    <property type="match status" value="1"/>
</dbReference>
<dbReference type="PANTHER" id="PTHR35204">
    <property type="entry name" value="YALI0A21131P"/>
    <property type="match status" value="1"/>
</dbReference>
<reference key="1">
    <citation type="journal article" date="1997" name="Nature">
        <title>The nucleotide sequence of Saccharomyces cerevisiae chromosome XV.</title>
        <authorList>
            <person name="Dujon B."/>
            <person name="Albermann K."/>
            <person name="Aldea M."/>
            <person name="Alexandraki D."/>
            <person name="Ansorge W."/>
            <person name="Arino J."/>
            <person name="Benes V."/>
            <person name="Bohn C."/>
            <person name="Bolotin-Fukuhara M."/>
            <person name="Bordonne R."/>
            <person name="Boyer J."/>
            <person name="Camasses A."/>
            <person name="Casamayor A."/>
            <person name="Casas C."/>
            <person name="Cheret G."/>
            <person name="Cziepluch C."/>
            <person name="Daignan-Fornier B."/>
            <person name="Dang V.-D."/>
            <person name="de Haan M."/>
            <person name="Delius H."/>
            <person name="Durand P."/>
            <person name="Fairhead C."/>
            <person name="Feldmann H."/>
            <person name="Gaillon L."/>
            <person name="Galisson F."/>
            <person name="Gamo F.-J."/>
            <person name="Gancedo C."/>
            <person name="Goffeau A."/>
            <person name="Goulding S.E."/>
            <person name="Grivell L.A."/>
            <person name="Habbig B."/>
            <person name="Hand N.J."/>
            <person name="Hani J."/>
            <person name="Hattenhorst U."/>
            <person name="Hebling U."/>
            <person name="Hernando Y."/>
            <person name="Herrero E."/>
            <person name="Heumann K."/>
            <person name="Hiesel R."/>
            <person name="Hilger F."/>
            <person name="Hofmann B."/>
            <person name="Hollenberg C.P."/>
            <person name="Hughes B."/>
            <person name="Jauniaux J.-C."/>
            <person name="Kalogeropoulos A."/>
            <person name="Katsoulou C."/>
            <person name="Kordes E."/>
            <person name="Lafuente M.J."/>
            <person name="Landt O."/>
            <person name="Louis E.J."/>
            <person name="Maarse A.C."/>
            <person name="Madania A."/>
            <person name="Mannhaupt G."/>
            <person name="Marck C."/>
            <person name="Martin R.P."/>
            <person name="Mewes H.-W."/>
            <person name="Michaux G."/>
            <person name="Paces V."/>
            <person name="Parle-McDermott A.G."/>
            <person name="Pearson B.M."/>
            <person name="Perrin A."/>
            <person name="Pettersson B."/>
            <person name="Poch O."/>
            <person name="Pohl T.M."/>
            <person name="Poirey R."/>
            <person name="Portetelle D."/>
            <person name="Pujol A."/>
            <person name="Purnelle B."/>
            <person name="Ramezani Rad M."/>
            <person name="Rechmann S."/>
            <person name="Schwager C."/>
            <person name="Schweizer M."/>
            <person name="Sor F."/>
            <person name="Sterky F."/>
            <person name="Tarassov I.A."/>
            <person name="Teodoru C."/>
            <person name="Tettelin H."/>
            <person name="Thierry A."/>
            <person name="Tobiasch E."/>
            <person name="Tzermia M."/>
            <person name="Uhlen M."/>
            <person name="Unseld M."/>
            <person name="Valens M."/>
            <person name="Vandenbol M."/>
            <person name="Vetter I."/>
            <person name="Vlcek C."/>
            <person name="Voet M."/>
            <person name="Volckaert G."/>
            <person name="Voss H."/>
            <person name="Wambutt R."/>
            <person name="Wedler H."/>
            <person name="Wiemann S."/>
            <person name="Winsor B."/>
            <person name="Wolfe K.H."/>
            <person name="Zollner A."/>
            <person name="Zumstein E."/>
            <person name="Kleine K."/>
        </authorList>
    </citation>
    <scope>NUCLEOTIDE SEQUENCE [LARGE SCALE GENOMIC DNA]</scope>
    <source>
        <strain>ATCC 204508 / S288c</strain>
    </source>
</reference>
<reference key="2">
    <citation type="journal article" date="2014" name="G3 (Bethesda)">
        <title>The reference genome sequence of Saccharomyces cerevisiae: Then and now.</title>
        <authorList>
            <person name="Engel S.R."/>
            <person name="Dietrich F.S."/>
            <person name="Fisk D.G."/>
            <person name="Binkley G."/>
            <person name="Balakrishnan R."/>
            <person name="Costanzo M.C."/>
            <person name="Dwight S.S."/>
            <person name="Hitz B.C."/>
            <person name="Karra K."/>
            <person name="Nash R.S."/>
            <person name="Weng S."/>
            <person name="Wong E.D."/>
            <person name="Lloyd P."/>
            <person name="Skrzypek M.S."/>
            <person name="Miyasato S.R."/>
            <person name="Simison M."/>
            <person name="Cherry J.M."/>
        </authorList>
    </citation>
    <scope>GENOME REANNOTATION</scope>
    <source>
        <strain>ATCC 204508 / S288c</strain>
    </source>
</reference>
<organism>
    <name type="scientific">Saccharomyces cerevisiae (strain ATCC 204508 / S288c)</name>
    <name type="common">Baker's yeast</name>
    <dbReference type="NCBI Taxonomy" id="559292"/>
    <lineage>
        <taxon>Eukaryota</taxon>
        <taxon>Fungi</taxon>
        <taxon>Dikarya</taxon>
        <taxon>Ascomycota</taxon>
        <taxon>Saccharomycotina</taxon>
        <taxon>Saccharomycetes</taxon>
        <taxon>Saccharomycetales</taxon>
        <taxon>Saccharomycetaceae</taxon>
        <taxon>Saccharomyces</taxon>
    </lineage>
</organism>
<sequence>MRFHRQGTAATVGVLLIVLLGFCWKLSESYGIVSTALPHKQPATKITDTPSIRWDNYHEFVRDIDFDNSTAIFNSIRAALRQSPSDIHPVGVSYFPAVIPKGTLMYHAGSKVPTTFEWLAMDHEFSYSFGLRSPSYGRKSLERRHGRFGNGTHGDHPKGPPPPPPPDEKDRGSQKMLTYRAARDLNKFLYLDGASAAKTDSGEMDTQLMLSNVIKEKLNLTDDGENERMAERLYAARICKWGKPFGLDGIIRVEVGFEVVLCDFSADNVELVSMLEMVQPNQYLGLPAPTVISKEEGWPLDENGNLVEDQLTDDQKAILEREDGWEKTFSNFNAVKSFNQLRAGTAHDNGEHRIHIDYRYLVSGINRTYIAPDPNNRRLLDEGMTWEKQLDMVDDLEKALEVGFDATQSMDWQLAFDELVLKFAPLLKSVSNILNSNGDINESIAINATALTLNFCLRFEPASNNSDEFGSGKDFAVYQYVSPYQALKTDADFLIWSSAVSVVGEIVDAIYKVNDLLIPEVYSFMTDNTTSSDLIKNVETARSTIDGLIESLGWIELNYRCERQCNWDEVCYTPSWGPSPMGMTEPGSHNEGFGTHFDESRQRLVINSKLQCININDLMVNRNH</sequence>
<evidence type="ECO:0000255" key="1"/>
<evidence type="ECO:0000256" key="2">
    <source>
        <dbReference type="SAM" id="MobiDB-lite"/>
    </source>
</evidence>
<evidence type="ECO:0000305" key="3"/>